<feature type="chain" id="PRO_0000324376" description="Capsid protein">
    <location>
        <begin position="1"/>
        <end position="195"/>
    </location>
</feature>
<feature type="repeat" description="1; half-length">
    <location>
        <begin position="167"/>
        <end position="172"/>
    </location>
</feature>
<feature type="repeat" description="2">
    <location>
        <begin position="174"/>
        <end position="180"/>
    </location>
</feature>
<feature type="repeat" description="3">
    <location>
        <begin position="182"/>
        <end position="188"/>
    </location>
</feature>
<feature type="region of interest" description="Disordered" evidence="2">
    <location>
        <begin position="148"/>
        <end position="195"/>
    </location>
</feature>
<feature type="region of interest" description="3 X 7 AA repeats of S-P-R-R-R-[PR]-S">
    <location>
        <begin position="167"/>
        <end position="188"/>
    </location>
</feature>
<feature type="region of interest" description="RNA binding" evidence="1">
    <location>
        <begin position="189"/>
        <end position="195"/>
    </location>
</feature>
<feature type="short sequence motif" description="Bipartite nuclear localization signal" evidence="1">
    <location>
        <begin position="170"/>
        <end position="187"/>
    </location>
</feature>
<feature type="compositionally biased region" description="Basic residues" evidence="2">
    <location>
        <begin position="161"/>
        <end position="188"/>
    </location>
</feature>
<feature type="modified residue" description="Phosphoserine; by host" evidence="1">
    <location>
        <position position="167"/>
    </location>
</feature>
<feature type="modified residue" description="Phosphoserine; by host" evidence="1">
    <location>
        <position position="174"/>
    </location>
</feature>
<feature type="modified residue" description="Phosphoserine; by host" evidence="1">
    <location>
        <position position="182"/>
    </location>
</feature>
<sequence>MDRTTLPYGLFGLDIDPYKEFGATVELLSFLPSDFFPSVRDLLDTASALYRESLESSDHCSPHHTALRQAILCWGELMTLATWVGNNLEDPASRDLVVNYVNTNLGLKIRQLLWFHISCLTFGRETVLEYLVSFGVWIRTPPAYRPPNAPILSTLPETTVVRRRGRSPRRRTPSPRRRRSQSPRRRRSASPASQC</sequence>
<dbReference type="EMBL" id="AB056513">
    <property type="status" value="NOT_ANNOTATED_CDS"/>
    <property type="molecule type" value="Genomic_DNA"/>
</dbReference>
<dbReference type="SMR" id="P0C683"/>
<dbReference type="Proteomes" id="UP000008537">
    <property type="component" value="Genome"/>
</dbReference>
<dbReference type="GO" id="GO:0043657">
    <property type="term" value="C:host cell"/>
    <property type="evidence" value="ECO:0007669"/>
    <property type="project" value="GOC"/>
</dbReference>
<dbReference type="GO" id="GO:0030430">
    <property type="term" value="C:host cell cytoplasm"/>
    <property type="evidence" value="ECO:0007669"/>
    <property type="project" value="UniProtKB-SubCell"/>
</dbReference>
<dbReference type="GO" id="GO:0039619">
    <property type="term" value="C:T=4 icosahedral viral capsid"/>
    <property type="evidence" value="ECO:0007669"/>
    <property type="project" value="UniProtKB-UniRule"/>
</dbReference>
<dbReference type="GO" id="GO:0003677">
    <property type="term" value="F:DNA binding"/>
    <property type="evidence" value="ECO:0007669"/>
    <property type="project" value="UniProtKB-UniRule"/>
</dbReference>
<dbReference type="GO" id="GO:0003723">
    <property type="term" value="F:RNA binding"/>
    <property type="evidence" value="ECO:0007669"/>
    <property type="project" value="UniProtKB-UniRule"/>
</dbReference>
<dbReference type="GO" id="GO:0005198">
    <property type="term" value="F:structural molecule activity"/>
    <property type="evidence" value="ECO:0007669"/>
    <property type="project" value="UniProtKB-UniRule"/>
</dbReference>
<dbReference type="GO" id="GO:0075521">
    <property type="term" value="P:microtubule-dependent intracellular transport of viral material towards nucleus"/>
    <property type="evidence" value="ECO:0007669"/>
    <property type="project" value="UniProtKB-UniRule"/>
</dbReference>
<dbReference type="GO" id="GO:0046718">
    <property type="term" value="P:symbiont entry into host cell"/>
    <property type="evidence" value="ECO:0007669"/>
    <property type="project" value="UniProtKB-UniRule"/>
</dbReference>
<dbReference type="GO" id="GO:0075732">
    <property type="term" value="P:viral penetration into host nucleus"/>
    <property type="evidence" value="ECO:0007669"/>
    <property type="project" value="UniProtKB-UniRule"/>
</dbReference>
<dbReference type="FunFam" id="1.10.4090.10:FF:000001">
    <property type="entry name" value="Capsid protein"/>
    <property type="match status" value="1"/>
</dbReference>
<dbReference type="Gene3D" id="1.10.4090.10">
    <property type="entry name" value="Viral capsid, core domain supefamily, Hepatitis B virus"/>
    <property type="match status" value="1"/>
</dbReference>
<dbReference type="HAMAP" id="MF_04076">
    <property type="entry name" value="HBV_HBEAG"/>
    <property type="match status" value="1"/>
</dbReference>
<dbReference type="InterPro" id="IPR002006">
    <property type="entry name" value="Hepatitis_core"/>
</dbReference>
<dbReference type="InterPro" id="IPR036459">
    <property type="entry name" value="Viral_capsid_core_dom_sf_HBV"/>
</dbReference>
<dbReference type="Pfam" id="PF00906">
    <property type="entry name" value="Hepatitis_core"/>
    <property type="match status" value="3"/>
</dbReference>
<dbReference type="SUPFAM" id="SSF47852">
    <property type="entry name" value="Hepatitis B viral capsid (hbcag)"/>
    <property type="match status" value="1"/>
</dbReference>
<accession>P0C683</accession>
<reference key="1">
    <citation type="journal article" date="2001" name="J. Virol. Methods">
        <title>Determination of hepatitis B virus genotype G by polymerase chain reaction with hemi-nested primers.</title>
        <authorList>
            <person name="Kato H."/>
            <person name="Orito E."/>
            <person name="Sugauchi F."/>
            <person name="Ueda R."/>
            <person name="Gish R.G."/>
            <person name="Usuda S."/>
            <person name="Miyakawa Y."/>
            <person name="Mizokami M."/>
        </authorList>
    </citation>
    <scope>NUCLEOTIDE SEQUENCE [GENOMIC DNA]</scope>
</reference>
<protein>
    <recommendedName>
        <fullName evidence="1">Capsid protein</fullName>
    </recommendedName>
    <alternativeName>
        <fullName evidence="1">Core antigen</fullName>
    </alternativeName>
    <alternativeName>
        <fullName evidence="1">Core protein</fullName>
    </alternativeName>
    <alternativeName>
        <fullName evidence="1">HBcAg</fullName>
    </alternativeName>
    <alternativeName>
        <fullName evidence="1">p21.5</fullName>
    </alternativeName>
</protein>
<comment type="function">
    <text evidence="1">Self assembles to form an icosahedral capsid. Most capsids appear to be large particles with an icosahedral symmetry of T=4 and consist of 240 copies of capsid protein, though a fraction forms smaller T=3 particles consisting of 180 capsid proteins. Entering capsids are transported along microtubules to the nucleus. Phosphorylation of the capsid is thought to induce exposure of nuclear localization signal in the C-terminal portion of the capsid protein that allows binding to the nuclear pore complex via the importin (karyopherin-) alpha and beta. Capsids are imported in intact form through the nuclear pore into the nuclear basket, where it probably binds NUP153. Only capsids that contain the mature viral genome can release the viral DNA and capsid protein into the nucleoplasm. Immature capsids get stuck in the basket. Capsids encapsulate the pre-genomic RNA and the P protein. Pre-genomic RNA is reverse-transcribed into DNA while the capsid is still in the cytoplasm. The capsid can then either be directed to the nucleus, providing more genomes for transcription, or bud through the endoplasmic reticulum to provide new virions.</text>
</comment>
<comment type="subunit">
    <text evidence="1">Homodimerizes, then multimerizes. Interacts with cytosol exposed regions of viral L glycoprotein present in the reticulum-to-Golgi compartment. Interacts with human FLNB. Phosphorylated form interacts with host importin alpha; this interaction depends on the exposure of the NLS, which itself depends upon genome maturation and/or phosphorylation of the capsid protein. Interacts with host NUP153.</text>
</comment>
<comment type="subcellular location">
    <subcellularLocation>
        <location evidence="1">Virion</location>
    </subcellularLocation>
    <subcellularLocation>
        <location evidence="1">Host cytoplasm</location>
    </subcellularLocation>
</comment>
<comment type="PTM">
    <text evidence="1">Phosphorylated by host SRPK1, SRPK2, and maybe protein kinase C or GAPDH. Phosphorylation is critical for pregenomic RNA packaging. Protein kinase C phosphorylation is stimulated by HBx protein and may play a role in transport of the viral genome to the nucleus at the late step during the viral replication cycle.</text>
</comment>
<comment type="similarity">
    <text evidence="1">Belongs to the orthohepadnavirus core antigen family.</text>
</comment>
<keyword id="KW-0167">Capsid protein</keyword>
<keyword id="KW-1176">Cytoplasmic inwards viral transport</keyword>
<keyword id="KW-0238">DNA-binding</keyword>
<keyword id="KW-1035">Host cytoplasm</keyword>
<keyword id="KW-0945">Host-virus interaction</keyword>
<keyword id="KW-1177">Microtubular inwards viral transport</keyword>
<keyword id="KW-0597">Phosphoprotein</keyword>
<keyword id="KW-0677">Repeat</keyword>
<keyword id="KW-0694">RNA-binding</keyword>
<keyword id="KW-1144">T=4 icosahedral capsid protein</keyword>
<keyword id="KW-1163">Viral penetration into host nucleus</keyword>
<keyword id="KW-0946">Virion</keyword>
<keyword id="KW-1160">Virus entry into host cell</keyword>
<evidence type="ECO:0000255" key="1">
    <source>
        <dbReference type="HAMAP-Rule" id="MF_04076"/>
    </source>
</evidence>
<evidence type="ECO:0000256" key="2">
    <source>
        <dbReference type="SAM" id="MobiDB-lite"/>
    </source>
</evidence>
<gene>
    <name evidence="1" type="primary">C</name>
</gene>
<name>CAPSD_HBVG2</name>
<proteinExistence type="inferred from homology"/>
<organism>
    <name type="scientific">Hepatitis B virus genotype G (isolate United States/USG17/2002)</name>
    <name type="common">HBV-G</name>
    <dbReference type="NCBI Taxonomy" id="489537"/>
    <lineage>
        <taxon>Viruses</taxon>
        <taxon>Riboviria</taxon>
        <taxon>Pararnavirae</taxon>
        <taxon>Artverviricota</taxon>
        <taxon>Revtraviricetes</taxon>
        <taxon>Blubervirales</taxon>
        <taxon>Hepadnaviridae</taxon>
        <taxon>Orthohepadnavirus</taxon>
        <taxon>Hepatitis B virus</taxon>
        <taxon>hepatitis B virus genotype G</taxon>
    </lineage>
</organism>
<organismHost>
    <name type="scientific">Homo sapiens</name>
    <name type="common">Human</name>
    <dbReference type="NCBI Taxonomy" id="9606"/>
</organismHost>
<organismHost>
    <name type="scientific">Pan troglodytes</name>
    <name type="common">Chimpanzee</name>
    <dbReference type="NCBI Taxonomy" id="9598"/>
</organismHost>